<sequence length="436" mass="50042">MKNKYISKLLVGAATITLATMISNGEAKASENTQQTSTKHQTTQNNYVTDQQKAFYQVLHLKGITEEQRNQYIKTLREHPERAQEVFSESLKDSKNPDRRVAQQNAFYNVLKNDNLTEQEKNNYIAQIKENPDRSQQVWVESVQSSKAKERQNIENADKAIKDFQDNKAPHDKSAAYEANSKLPKDLRDKNNRFVEKVSIEKAIVRHDERVKSANDAISKLNEKDSIENRRLAQREVNKAPMDVKEHLQKQLDALVAQKDAEKKVAPKVEAPQIQSPQIEKPKAESPKVEVPQIQSPKVEVPQSKLLGYYQSLKDSFNYGYKYLTDTYKSYKEKYDTAKYYYNTYYKYKGAIDQTVLTVLGSGSKSYIQPLKVDDKNGYLAKSYAQVRNYVTESINTGKVLYTFYQNPTLVKTAIKAQETASSIKNTLSNLLSFWK</sequence>
<name>SBI_STAAN</name>
<protein>
    <recommendedName>
        <fullName>Immunoglobulin-binding protein Sbi</fullName>
    </recommendedName>
</protein>
<evidence type="ECO:0000250" key="1">
    <source>
        <dbReference type="UniProtKB" id="A6QJQ7"/>
    </source>
</evidence>
<evidence type="ECO:0000250" key="2">
    <source>
        <dbReference type="UniProtKB" id="Q931F4"/>
    </source>
</evidence>
<evidence type="ECO:0000255" key="3"/>
<evidence type="ECO:0000256" key="4">
    <source>
        <dbReference type="SAM" id="MobiDB-lite"/>
    </source>
</evidence>
<evidence type="ECO:0000305" key="5"/>
<feature type="signal peptide" evidence="3">
    <location>
        <begin position="1"/>
        <end position="29"/>
    </location>
</feature>
<feature type="chain" id="PRO_0000361893" description="Immunoglobulin-binding protein Sbi">
    <location>
        <begin position="30"/>
        <end position="436"/>
    </location>
</feature>
<feature type="repeat" description="B 1">
    <location>
        <begin position="43"/>
        <end position="94"/>
    </location>
</feature>
<feature type="repeat" description="B 2">
    <location>
        <begin position="95"/>
        <end position="148"/>
    </location>
</feature>
<feature type="repeat" description="2-1">
    <location>
        <begin position="267"/>
        <end position="271"/>
    </location>
</feature>
<feature type="repeat" description="2-2">
    <location>
        <begin position="272"/>
        <end position="276"/>
    </location>
</feature>
<feature type="repeat" description="2-3">
    <location>
        <begin position="277"/>
        <end position="281"/>
    </location>
</feature>
<feature type="repeat" description="2-4">
    <location>
        <begin position="282"/>
        <end position="286"/>
    </location>
</feature>
<feature type="repeat" description="2-5">
    <location>
        <begin position="287"/>
        <end position="291"/>
    </location>
</feature>
<feature type="repeat" description="2-6">
    <location>
        <begin position="292"/>
        <end position="296"/>
    </location>
</feature>
<feature type="repeat" description="2-7">
    <location>
        <begin position="297"/>
        <end position="301"/>
    </location>
</feature>
<feature type="repeat" description="2-8">
    <location>
        <begin position="302"/>
        <end position="306"/>
    </location>
</feature>
<feature type="region of interest" description="Sbi-I">
    <location>
        <begin position="42"/>
        <end position="94"/>
    </location>
</feature>
<feature type="region of interest" description="Sbi-II">
    <location>
        <begin position="103"/>
        <end position="153"/>
    </location>
</feature>
<feature type="region of interest" description="Sbi-III">
    <location>
        <begin position="154"/>
        <end position="195"/>
    </location>
</feature>
<feature type="region of interest" description="Sbi-IV">
    <location>
        <begin position="196"/>
        <end position="253"/>
    </location>
</feature>
<feature type="region of interest" description="8 X 5 AA tandem repeat of P-[KQ]-[AISV]-[EKQ]-[AKLSV]">
    <location>
        <begin position="267"/>
        <end position="306"/>
    </location>
</feature>
<feature type="region of interest" description="Disordered" evidence="4">
    <location>
        <begin position="267"/>
        <end position="295"/>
    </location>
</feature>
<keyword id="KW-1003">Cell membrane</keyword>
<keyword id="KW-0390">IgG-binding protein</keyword>
<keyword id="KW-0472">Membrane</keyword>
<keyword id="KW-0677">Repeat</keyword>
<keyword id="KW-0964">Secreted</keyword>
<keyword id="KW-0732">Signal</keyword>
<keyword id="KW-0843">Virulence</keyword>
<gene>
    <name type="primary">sbi</name>
    <name type="ordered locus">SA2206</name>
</gene>
<reference key="1">
    <citation type="submission" date="2000-11" db="EMBL/GenBank/DDBJ databases">
        <title>Identification of differentially expressed genes of Staphylococcus aureus in response to and in raised resistance to imipenem.</title>
        <authorList>
            <person name="Kuroda-Murakami H."/>
            <person name="Kuroda M."/>
            <person name="Hiramatsu K."/>
        </authorList>
    </citation>
    <scope>NUCLEOTIDE SEQUENCE [GENOMIC DNA]</scope>
</reference>
<reference key="2">
    <citation type="journal article" date="2001" name="Lancet">
        <title>Whole genome sequencing of meticillin-resistant Staphylococcus aureus.</title>
        <authorList>
            <person name="Kuroda M."/>
            <person name="Ohta T."/>
            <person name="Uchiyama I."/>
            <person name="Baba T."/>
            <person name="Yuzawa H."/>
            <person name="Kobayashi I."/>
            <person name="Cui L."/>
            <person name="Oguchi A."/>
            <person name="Aoki K."/>
            <person name="Nagai Y."/>
            <person name="Lian J.-Q."/>
            <person name="Ito T."/>
            <person name="Kanamori M."/>
            <person name="Matsumaru H."/>
            <person name="Maruyama A."/>
            <person name="Murakami H."/>
            <person name="Hosoyama A."/>
            <person name="Mizutani-Ui Y."/>
            <person name="Takahashi N.K."/>
            <person name="Sawano T."/>
            <person name="Inoue R."/>
            <person name="Kaito C."/>
            <person name="Sekimizu K."/>
            <person name="Hirakawa H."/>
            <person name="Kuhara S."/>
            <person name="Goto S."/>
            <person name="Yabuzaki J."/>
            <person name="Kanehisa M."/>
            <person name="Yamashita A."/>
            <person name="Oshima K."/>
            <person name="Furuya K."/>
            <person name="Yoshino C."/>
            <person name="Shiba T."/>
            <person name="Hattori M."/>
            <person name="Ogasawara N."/>
            <person name="Hayashi H."/>
            <person name="Hiramatsu K."/>
        </authorList>
    </citation>
    <scope>NUCLEOTIDE SEQUENCE [LARGE SCALE GENOMIC DNA]</scope>
    <source>
        <strain>N315</strain>
    </source>
</reference>
<reference key="3">
    <citation type="submission" date="2007-10" db="UniProtKB">
        <title>Shotgun proteomic analysis of total and membrane protein extracts of S. aureus strain N315.</title>
        <authorList>
            <person name="Vaezzadeh A.R."/>
            <person name="Deshusses J."/>
            <person name="Lescuyer P."/>
            <person name="Hochstrasser D.F."/>
        </authorList>
    </citation>
    <scope>IDENTIFICATION BY MASS SPECTROMETRY [LARGE SCALE ANALYSIS]</scope>
    <source>
        <strain>N315</strain>
    </source>
</reference>
<accession>Q99RL2</accession>
<accession>Q7DI31</accession>
<proteinExistence type="evidence at protein level"/>
<dbReference type="EMBL" id="AB050860">
    <property type="protein sequence ID" value="BAB69828.1"/>
    <property type="molecule type" value="Genomic_DNA"/>
</dbReference>
<dbReference type="EMBL" id="BA000018">
    <property type="protein sequence ID" value="BAB43508.1"/>
    <property type="molecule type" value="Genomic_DNA"/>
</dbReference>
<dbReference type="PIR" id="C90043">
    <property type="entry name" value="C90043"/>
</dbReference>
<dbReference type="RefSeq" id="WP_000792559.1">
    <property type="nucleotide sequence ID" value="NC_002745.2"/>
</dbReference>
<dbReference type="SMR" id="Q99RL2"/>
<dbReference type="EnsemblBacteria" id="BAB43508">
    <property type="protein sequence ID" value="BAB43508"/>
    <property type="gene ID" value="BAB43508"/>
</dbReference>
<dbReference type="KEGG" id="sau:SA2206"/>
<dbReference type="HOGENOM" id="CLU_051343_0_0_9"/>
<dbReference type="PRO" id="PR:Q99RL2"/>
<dbReference type="GO" id="GO:0005576">
    <property type="term" value="C:extracellular region"/>
    <property type="evidence" value="ECO:0007669"/>
    <property type="project" value="UniProtKB-SubCell"/>
</dbReference>
<dbReference type="GO" id="GO:0005886">
    <property type="term" value="C:plasma membrane"/>
    <property type="evidence" value="ECO:0007669"/>
    <property type="project" value="UniProtKB-SubCell"/>
</dbReference>
<dbReference type="GO" id="GO:0019864">
    <property type="term" value="F:IgG binding"/>
    <property type="evidence" value="ECO:0007669"/>
    <property type="project" value="UniProtKB-KW"/>
</dbReference>
<dbReference type="Gene3D" id="1.20.5.420">
    <property type="entry name" value="Immunoglobulin FC, subunit C"/>
    <property type="match status" value="2"/>
</dbReference>
<dbReference type="Gene3D" id="1.10.10.1270">
    <property type="entry name" value="Sbi, C3 binding domain IV"/>
    <property type="match status" value="1"/>
</dbReference>
<dbReference type="InterPro" id="IPR009063">
    <property type="entry name" value="Ig/albumin-bd_sf"/>
</dbReference>
<dbReference type="InterPro" id="IPR021657">
    <property type="entry name" value="IgG-binding_Sbi_dom_IV"/>
</dbReference>
<dbReference type="InterPro" id="IPR003132">
    <property type="entry name" value="Protein_A_Ig-bd"/>
</dbReference>
<dbReference type="InterPro" id="IPR041909">
    <property type="entry name" value="Sbi_C3_db_domIV"/>
</dbReference>
<dbReference type="Pfam" id="PF02216">
    <property type="entry name" value="B"/>
    <property type="match status" value="2"/>
</dbReference>
<dbReference type="Pfam" id="PF11621">
    <property type="entry name" value="Sbi-IV"/>
    <property type="match status" value="1"/>
</dbReference>
<dbReference type="SUPFAM" id="SSF46997">
    <property type="entry name" value="Bacterial immunoglobulin/albumin-binding domains"/>
    <property type="match status" value="2"/>
</dbReference>
<comment type="function">
    <text evidence="1">Plays a role in the inhibition of both the innate and adaptive immune responses. Possesses two N-terminal domains that bind the Fc region of IgG and two domains that form a tripartite complex with complement factors C3b and CFH. By recruiting CFH and C3b, the secreted form acts as a potent complement inhibitor of the alternative pathway-mediated lysis.</text>
</comment>
<comment type="subunit">
    <text evidence="1 2">Interacts (via sbi-I and sbi-II domains) with the Fc region of mammalian immunoglobulin G (IgG) proteins. Interacts (via sbi-III and sbi-IV domains) with host complement C3. Interacts (via sbi-III and sbi-IV domains) with host CFH (By similarity). Interacts (via sbi-IV domain) with beta-2-glycoprotein 1/APOH (By similarity).</text>
</comment>
<comment type="subcellular location">
    <subcellularLocation>
        <location evidence="1">Secreted</location>
    </subcellularLocation>
    <subcellularLocation>
        <location evidence="1">Cell membrane</location>
    </subcellularLocation>
    <text evidence="1">Occurs both extracellularly and associated with the cytoplasmic membrane where only the domains I and II are exposed to the extracellular media. Membrane association occurs via binding to lipoteichoic acid.</text>
</comment>
<comment type="domain">
    <text evidence="1">Sbi-I and sbi-II domains provide protection only when anchored to the cell surface, whereas only the secreted sbi-III and sbi-IV domains are biologically active.</text>
</comment>
<comment type="similarity">
    <text evidence="5">Belongs to the immunoglobulin-binding protein Sbi family.</text>
</comment>
<organism>
    <name type="scientific">Staphylococcus aureus (strain N315)</name>
    <dbReference type="NCBI Taxonomy" id="158879"/>
    <lineage>
        <taxon>Bacteria</taxon>
        <taxon>Bacillati</taxon>
        <taxon>Bacillota</taxon>
        <taxon>Bacilli</taxon>
        <taxon>Bacillales</taxon>
        <taxon>Staphylococcaceae</taxon>
        <taxon>Staphylococcus</taxon>
    </lineage>
</organism>